<accession>B7MD71</accession>
<gene>
    <name evidence="1" type="primary">nrdR</name>
    <name type="ordered locus">ECS88_0408</name>
</gene>
<evidence type="ECO:0000255" key="1">
    <source>
        <dbReference type="HAMAP-Rule" id="MF_00440"/>
    </source>
</evidence>
<name>NRDR_ECO45</name>
<protein>
    <recommendedName>
        <fullName evidence="1">Transcriptional repressor NrdR</fullName>
    </recommendedName>
</protein>
<keyword id="KW-0067">ATP-binding</keyword>
<keyword id="KW-0238">DNA-binding</keyword>
<keyword id="KW-0479">Metal-binding</keyword>
<keyword id="KW-0547">Nucleotide-binding</keyword>
<keyword id="KW-1185">Reference proteome</keyword>
<keyword id="KW-0678">Repressor</keyword>
<keyword id="KW-0804">Transcription</keyword>
<keyword id="KW-0805">Transcription regulation</keyword>
<keyword id="KW-0862">Zinc</keyword>
<keyword id="KW-0863">Zinc-finger</keyword>
<comment type="function">
    <text evidence="1">Negatively regulates transcription of bacterial ribonucleotide reductase nrd genes and operons by binding to NrdR-boxes.</text>
</comment>
<comment type="cofactor">
    <cofactor evidence="1">
        <name>Zn(2+)</name>
        <dbReference type="ChEBI" id="CHEBI:29105"/>
    </cofactor>
    <text evidence="1">Binds 1 zinc ion.</text>
</comment>
<comment type="similarity">
    <text evidence="1">Belongs to the NrdR family.</text>
</comment>
<reference key="1">
    <citation type="journal article" date="2009" name="PLoS Genet.">
        <title>Organised genome dynamics in the Escherichia coli species results in highly diverse adaptive paths.</title>
        <authorList>
            <person name="Touchon M."/>
            <person name="Hoede C."/>
            <person name="Tenaillon O."/>
            <person name="Barbe V."/>
            <person name="Baeriswyl S."/>
            <person name="Bidet P."/>
            <person name="Bingen E."/>
            <person name="Bonacorsi S."/>
            <person name="Bouchier C."/>
            <person name="Bouvet O."/>
            <person name="Calteau A."/>
            <person name="Chiapello H."/>
            <person name="Clermont O."/>
            <person name="Cruveiller S."/>
            <person name="Danchin A."/>
            <person name="Diard M."/>
            <person name="Dossat C."/>
            <person name="Karoui M.E."/>
            <person name="Frapy E."/>
            <person name="Garry L."/>
            <person name="Ghigo J.M."/>
            <person name="Gilles A.M."/>
            <person name="Johnson J."/>
            <person name="Le Bouguenec C."/>
            <person name="Lescat M."/>
            <person name="Mangenot S."/>
            <person name="Martinez-Jehanne V."/>
            <person name="Matic I."/>
            <person name="Nassif X."/>
            <person name="Oztas S."/>
            <person name="Petit M.A."/>
            <person name="Pichon C."/>
            <person name="Rouy Z."/>
            <person name="Ruf C.S."/>
            <person name="Schneider D."/>
            <person name="Tourret J."/>
            <person name="Vacherie B."/>
            <person name="Vallenet D."/>
            <person name="Medigue C."/>
            <person name="Rocha E.P.C."/>
            <person name="Denamur E."/>
        </authorList>
    </citation>
    <scope>NUCLEOTIDE SEQUENCE [LARGE SCALE GENOMIC DNA]</scope>
    <source>
        <strain>S88 / ExPEC</strain>
    </source>
</reference>
<feature type="chain" id="PRO_1000124498" description="Transcriptional repressor NrdR">
    <location>
        <begin position="1"/>
        <end position="149"/>
    </location>
</feature>
<feature type="domain" description="ATP-cone" evidence="1">
    <location>
        <begin position="49"/>
        <end position="139"/>
    </location>
</feature>
<feature type="zinc finger region" evidence="1">
    <location>
        <begin position="3"/>
        <end position="34"/>
    </location>
</feature>
<organism>
    <name type="scientific">Escherichia coli O45:K1 (strain S88 / ExPEC)</name>
    <dbReference type="NCBI Taxonomy" id="585035"/>
    <lineage>
        <taxon>Bacteria</taxon>
        <taxon>Pseudomonadati</taxon>
        <taxon>Pseudomonadota</taxon>
        <taxon>Gammaproteobacteria</taxon>
        <taxon>Enterobacterales</taxon>
        <taxon>Enterobacteriaceae</taxon>
        <taxon>Escherichia</taxon>
    </lineage>
</organism>
<sequence length="149" mass="17229">MHCPFCFAVDTKVIDSRLVGEGSSVRRRRQCLVCNERFTTFEVAELVMPRVVKSNDVREPFNEEKLRSGMLRALEKRPVSSDDVEMAINHIKSQLRATGEREVPSKMIGNLVMEQLKKLDKVAYIRFASVYRSFEDIKEFGEEIARLED</sequence>
<proteinExistence type="inferred from homology"/>
<dbReference type="EMBL" id="CU928161">
    <property type="protein sequence ID" value="CAR01756.1"/>
    <property type="molecule type" value="Genomic_DNA"/>
</dbReference>
<dbReference type="RefSeq" id="WP_000543535.1">
    <property type="nucleotide sequence ID" value="NC_011742.1"/>
</dbReference>
<dbReference type="SMR" id="B7MD71"/>
<dbReference type="GeneID" id="93777047"/>
<dbReference type="KEGG" id="ecz:ECS88_0408"/>
<dbReference type="HOGENOM" id="CLU_108412_0_0_6"/>
<dbReference type="Proteomes" id="UP000000747">
    <property type="component" value="Chromosome"/>
</dbReference>
<dbReference type="GO" id="GO:0005524">
    <property type="term" value="F:ATP binding"/>
    <property type="evidence" value="ECO:0007669"/>
    <property type="project" value="UniProtKB-KW"/>
</dbReference>
<dbReference type="GO" id="GO:0003677">
    <property type="term" value="F:DNA binding"/>
    <property type="evidence" value="ECO:0007669"/>
    <property type="project" value="UniProtKB-KW"/>
</dbReference>
<dbReference type="GO" id="GO:0008270">
    <property type="term" value="F:zinc ion binding"/>
    <property type="evidence" value="ECO:0007669"/>
    <property type="project" value="UniProtKB-UniRule"/>
</dbReference>
<dbReference type="GO" id="GO:0045892">
    <property type="term" value="P:negative regulation of DNA-templated transcription"/>
    <property type="evidence" value="ECO:0007669"/>
    <property type="project" value="UniProtKB-UniRule"/>
</dbReference>
<dbReference type="HAMAP" id="MF_00440">
    <property type="entry name" value="NrdR"/>
    <property type="match status" value="1"/>
</dbReference>
<dbReference type="InterPro" id="IPR005144">
    <property type="entry name" value="ATP-cone_dom"/>
</dbReference>
<dbReference type="InterPro" id="IPR055173">
    <property type="entry name" value="NrdR-like_N"/>
</dbReference>
<dbReference type="InterPro" id="IPR003796">
    <property type="entry name" value="RNR_NrdR-like"/>
</dbReference>
<dbReference type="NCBIfam" id="TIGR00244">
    <property type="entry name" value="transcriptional regulator NrdR"/>
    <property type="match status" value="1"/>
</dbReference>
<dbReference type="PANTHER" id="PTHR30455">
    <property type="entry name" value="TRANSCRIPTIONAL REPRESSOR NRDR"/>
    <property type="match status" value="1"/>
</dbReference>
<dbReference type="PANTHER" id="PTHR30455:SF2">
    <property type="entry name" value="TRANSCRIPTIONAL REPRESSOR NRDR"/>
    <property type="match status" value="1"/>
</dbReference>
<dbReference type="Pfam" id="PF03477">
    <property type="entry name" value="ATP-cone"/>
    <property type="match status" value="1"/>
</dbReference>
<dbReference type="Pfam" id="PF22811">
    <property type="entry name" value="Zn_ribbon_NrdR"/>
    <property type="match status" value="1"/>
</dbReference>
<dbReference type="PROSITE" id="PS51161">
    <property type="entry name" value="ATP_CONE"/>
    <property type="match status" value="1"/>
</dbReference>